<protein>
    <recommendedName>
        <fullName evidence="1">S-adenosylmethionine:tRNA ribosyltransferase-isomerase</fullName>
        <ecNumber evidence="1">2.4.99.17</ecNumber>
    </recommendedName>
    <alternativeName>
        <fullName evidence="1">Queuosine biosynthesis protein QueA</fullName>
    </alternativeName>
</protein>
<sequence length="340" mass="38869">MLDPLKVDSYDYHLPPHLIAKEPVQPADRAKLLIYDRKTDTITHTIFKNLPQFLPQKTHIVFNDTKVIKARIFGHKSSGGKIELLINRPLENERFNVFIRGKVKVGTTLHFSQGLQAIVEELIEDGTRIVTFYHDEKRLSFHELLPILDTIGSIPLPPYIDRAAKKEDETNYQPIFAKKAGAVAAPTASLHFTEQMLNSMAKEFPFHFVTLHVGAGTFKPVEANLITEHAMHSEYYEIPKDTIEVIESDEKVLAVGTTVTRTIEYYVRTKKSFGECDLFLNPLNPPKRVDHLLTNFHLPKSTLIMLVASFIGLETTKRVYQEAIEKEYRFYSYGDAMLIL</sequence>
<gene>
    <name evidence="1" type="primary">queA</name>
    <name type="ordered locus">NIS_1146</name>
</gene>
<organism>
    <name type="scientific">Nitratiruptor sp. (strain SB155-2)</name>
    <dbReference type="NCBI Taxonomy" id="387092"/>
    <lineage>
        <taxon>Bacteria</taxon>
        <taxon>Pseudomonadati</taxon>
        <taxon>Campylobacterota</taxon>
        <taxon>Epsilonproteobacteria</taxon>
        <taxon>Nautiliales</taxon>
        <taxon>Nitratiruptoraceae</taxon>
        <taxon>Nitratiruptor</taxon>
    </lineage>
</organism>
<dbReference type="EC" id="2.4.99.17" evidence="1"/>
<dbReference type="EMBL" id="AP009178">
    <property type="protein sequence ID" value="BAF70255.1"/>
    <property type="molecule type" value="Genomic_DNA"/>
</dbReference>
<dbReference type="RefSeq" id="WP_012082518.1">
    <property type="nucleotide sequence ID" value="NC_009662.1"/>
</dbReference>
<dbReference type="SMR" id="A6Q446"/>
<dbReference type="FunCoup" id="A6Q446">
    <property type="interactions" value="386"/>
</dbReference>
<dbReference type="STRING" id="387092.NIS_1146"/>
<dbReference type="KEGG" id="nis:NIS_1146"/>
<dbReference type="eggNOG" id="COG0809">
    <property type="taxonomic scope" value="Bacteria"/>
</dbReference>
<dbReference type="HOGENOM" id="CLU_039110_1_0_7"/>
<dbReference type="InParanoid" id="A6Q446"/>
<dbReference type="OrthoDB" id="9805933at2"/>
<dbReference type="UniPathway" id="UPA00392"/>
<dbReference type="Proteomes" id="UP000001118">
    <property type="component" value="Chromosome"/>
</dbReference>
<dbReference type="GO" id="GO:0005737">
    <property type="term" value="C:cytoplasm"/>
    <property type="evidence" value="ECO:0007669"/>
    <property type="project" value="UniProtKB-SubCell"/>
</dbReference>
<dbReference type="GO" id="GO:0051075">
    <property type="term" value="F:S-adenosylmethionine:tRNA ribosyltransferase-isomerase activity"/>
    <property type="evidence" value="ECO:0007669"/>
    <property type="project" value="UniProtKB-EC"/>
</dbReference>
<dbReference type="GO" id="GO:0008616">
    <property type="term" value="P:queuosine biosynthetic process"/>
    <property type="evidence" value="ECO:0007669"/>
    <property type="project" value="UniProtKB-UniRule"/>
</dbReference>
<dbReference type="GO" id="GO:0002099">
    <property type="term" value="P:tRNA wobble guanine modification"/>
    <property type="evidence" value="ECO:0007669"/>
    <property type="project" value="TreeGrafter"/>
</dbReference>
<dbReference type="Gene3D" id="2.40.10.240">
    <property type="entry name" value="QueA-like"/>
    <property type="match status" value="1"/>
</dbReference>
<dbReference type="Gene3D" id="3.40.1780.10">
    <property type="entry name" value="QueA-like"/>
    <property type="match status" value="1"/>
</dbReference>
<dbReference type="HAMAP" id="MF_00113">
    <property type="entry name" value="QueA"/>
    <property type="match status" value="1"/>
</dbReference>
<dbReference type="InterPro" id="IPR003699">
    <property type="entry name" value="QueA"/>
</dbReference>
<dbReference type="InterPro" id="IPR042118">
    <property type="entry name" value="QueA_dom1"/>
</dbReference>
<dbReference type="InterPro" id="IPR042119">
    <property type="entry name" value="QueA_dom2"/>
</dbReference>
<dbReference type="InterPro" id="IPR036100">
    <property type="entry name" value="QueA_sf"/>
</dbReference>
<dbReference type="NCBIfam" id="NF001140">
    <property type="entry name" value="PRK00147.1"/>
    <property type="match status" value="1"/>
</dbReference>
<dbReference type="NCBIfam" id="TIGR00113">
    <property type="entry name" value="queA"/>
    <property type="match status" value="1"/>
</dbReference>
<dbReference type="PANTHER" id="PTHR30307">
    <property type="entry name" value="S-ADENOSYLMETHIONINE:TRNA RIBOSYLTRANSFERASE-ISOMERASE"/>
    <property type="match status" value="1"/>
</dbReference>
<dbReference type="PANTHER" id="PTHR30307:SF0">
    <property type="entry name" value="S-ADENOSYLMETHIONINE:TRNA RIBOSYLTRANSFERASE-ISOMERASE"/>
    <property type="match status" value="1"/>
</dbReference>
<dbReference type="Pfam" id="PF02547">
    <property type="entry name" value="Queuosine_synth"/>
    <property type="match status" value="1"/>
</dbReference>
<dbReference type="SUPFAM" id="SSF111337">
    <property type="entry name" value="QueA-like"/>
    <property type="match status" value="1"/>
</dbReference>
<feature type="chain" id="PRO_1000015238" description="S-adenosylmethionine:tRNA ribosyltransferase-isomerase">
    <location>
        <begin position="1"/>
        <end position="340"/>
    </location>
</feature>
<name>QUEA_NITSB</name>
<comment type="function">
    <text evidence="1">Transfers and isomerizes the ribose moiety from AdoMet to the 7-aminomethyl group of 7-deazaguanine (preQ1-tRNA) to give epoxyqueuosine (oQ-tRNA).</text>
</comment>
<comment type="catalytic activity">
    <reaction evidence="1">
        <text>7-aminomethyl-7-carbaguanosine(34) in tRNA + S-adenosyl-L-methionine = epoxyqueuosine(34) in tRNA + adenine + L-methionine + 2 H(+)</text>
        <dbReference type="Rhea" id="RHEA:32155"/>
        <dbReference type="Rhea" id="RHEA-COMP:10342"/>
        <dbReference type="Rhea" id="RHEA-COMP:18582"/>
        <dbReference type="ChEBI" id="CHEBI:15378"/>
        <dbReference type="ChEBI" id="CHEBI:16708"/>
        <dbReference type="ChEBI" id="CHEBI:57844"/>
        <dbReference type="ChEBI" id="CHEBI:59789"/>
        <dbReference type="ChEBI" id="CHEBI:82833"/>
        <dbReference type="ChEBI" id="CHEBI:194443"/>
        <dbReference type="EC" id="2.4.99.17"/>
    </reaction>
</comment>
<comment type="pathway">
    <text evidence="1">tRNA modification; tRNA-queuosine biosynthesis.</text>
</comment>
<comment type="subunit">
    <text evidence="1">Monomer.</text>
</comment>
<comment type="subcellular location">
    <subcellularLocation>
        <location evidence="1">Cytoplasm</location>
    </subcellularLocation>
</comment>
<comment type="similarity">
    <text evidence="1">Belongs to the QueA family.</text>
</comment>
<evidence type="ECO:0000255" key="1">
    <source>
        <dbReference type="HAMAP-Rule" id="MF_00113"/>
    </source>
</evidence>
<reference key="1">
    <citation type="journal article" date="2007" name="Proc. Natl. Acad. Sci. U.S.A.">
        <title>Deep-sea vent epsilon-proteobacterial genomes provide insights into emergence of pathogens.</title>
        <authorList>
            <person name="Nakagawa S."/>
            <person name="Takaki Y."/>
            <person name="Shimamura S."/>
            <person name="Reysenbach A.-L."/>
            <person name="Takai K."/>
            <person name="Horikoshi K."/>
        </authorList>
    </citation>
    <scope>NUCLEOTIDE SEQUENCE [LARGE SCALE GENOMIC DNA]</scope>
    <source>
        <strain>SB155-2</strain>
    </source>
</reference>
<proteinExistence type="inferred from homology"/>
<accession>A6Q446</accession>
<keyword id="KW-0963">Cytoplasm</keyword>
<keyword id="KW-0671">Queuosine biosynthesis</keyword>
<keyword id="KW-1185">Reference proteome</keyword>
<keyword id="KW-0949">S-adenosyl-L-methionine</keyword>
<keyword id="KW-0808">Transferase</keyword>